<reference key="1">
    <citation type="journal article" date="2004" name="Nat. Genet.">
        <title>Comparison of genome degradation in Paratyphi A and Typhi, human-restricted serovars of Salmonella enterica that cause typhoid.</title>
        <authorList>
            <person name="McClelland M."/>
            <person name="Sanderson K.E."/>
            <person name="Clifton S.W."/>
            <person name="Latreille P."/>
            <person name="Porwollik S."/>
            <person name="Sabo A."/>
            <person name="Meyer R."/>
            <person name="Bieri T."/>
            <person name="Ozersky P."/>
            <person name="McLellan M."/>
            <person name="Harkins C.R."/>
            <person name="Wang C."/>
            <person name="Nguyen C."/>
            <person name="Berghoff A."/>
            <person name="Elliott G."/>
            <person name="Kohlberg S."/>
            <person name="Strong C."/>
            <person name="Du F."/>
            <person name="Carter J."/>
            <person name="Kremizki C."/>
            <person name="Layman D."/>
            <person name="Leonard S."/>
            <person name="Sun H."/>
            <person name="Fulton L."/>
            <person name="Nash W."/>
            <person name="Miner T."/>
            <person name="Minx P."/>
            <person name="Delehaunty K."/>
            <person name="Fronick C."/>
            <person name="Magrini V."/>
            <person name="Nhan M."/>
            <person name="Warren W."/>
            <person name="Florea L."/>
            <person name="Spieth J."/>
            <person name="Wilson R.K."/>
        </authorList>
    </citation>
    <scope>NUCLEOTIDE SEQUENCE [LARGE SCALE GENOMIC DNA]</scope>
    <source>
        <strain>ATCC 9150 / SARB42</strain>
    </source>
</reference>
<dbReference type="EC" id="2.7.1.167" evidence="1"/>
<dbReference type="EC" id="2.7.7.70" evidence="1"/>
<dbReference type="EMBL" id="CP000026">
    <property type="protein sequence ID" value="AAV78903.1"/>
    <property type="molecule type" value="Genomic_DNA"/>
</dbReference>
<dbReference type="RefSeq" id="WP_000867681.1">
    <property type="nucleotide sequence ID" value="NC_006511.1"/>
</dbReference>
<dbReference type="SMR" id="Q5PC86"/>
<dbReference type="KEGG" id="spt:SPA3068"/>
<dbReference type="HOGENOM" id="CLU_021150_2_1_6"/>
<dbReference type="UniPathway" id="UPA00356">
    <property type="reaction ID" value="UER00437"/>
</dbReference>
<dbReference type="UniPathway" id="UPA00356">
    <property type="reaction ID" value="UER00439"/>
</dbReference>
<dbReference type="Proteomes" id="UP000008185">
    <property type="component" value="Chromosome"/>
</dbReference>
<dbReference type="GO" id="GO:0005829">
    <property type="term" value="C:cytosol"/>
    <property type="evidence" value="ECO:0007669"/>
    <property type="project" value="TreeGrafter"/>
</dbReference>
<dbReference type="GO" id="GO:0005524">
    <property type="term" value="F:ATP binding"/>
    <property type="evidence" value="ECO:0007669"/>
    <property type="project" value="UniProtKB-UniRule"/>
</dbReference>
<dbReference type="GO" id="GO:0033785">
    <property type="term" value="F:heptose 7-phosphate kinase activity"/>
    <property type="evidence" value="ECO:0007669"/>
    <property type="project" value="UniProtKB-UniRule"/>
</dbReference>
<dbReference type="GO" id="GO:0033786">
    <property type="term" value="F:heptose-1-phosphate adenylyltransferase activity"/>
    <property type="evidence" value="ECO:0007669"/>
    <property type="project" value="UniProtKB-UniRule"/>
</dbReference>
<dbReference type="GO" id="GO:0016773">
    <property type="term" value="F:phosphotransferase activity, alcohol group as acceptor"/>
    <property type="evidence" value="ECO:0007669"/>
    <property type="project" value="InterPro"/>
</dbReference>
<dbReference type="GO" id="GO:0097171">
    <property type="term" value="P:ADP-L-glycero-beta-D-manno-heptose biosynthetic process"/>
    <property type="evidence" value="ECO:0007669"/>
    <property type="project" value="UniProtKB-UniPathway"/>
</dbReference>
<dbReference type="CDD" id="cd01172">
    <property type="entry name" value="RfaE_like"/>
    <property type="match status" value="1"/>
</dbReference>
<dbReference type="FunFam" id="3.40.1190.20:FF:000002">
    <property type="entry name" value="Bifunctional protein HldE"/>
    <property type="match status" value="1"/>
</dbReference>
<dbReference type="FunFam" id="3.40.50.620:FF:000028">
    <property type="entry name" value="Bifunctional protein HldE"/>
    <property type="match status" value="1"/>
</dbReference>
<dbReference type="Gene3D" id="3.40.1190.20">
    <property type="match status" value="1"/>
</dbReference>
<dbReference type="Gene3D" id="3.40.50.620">
    <property type="entry name" value="HUPs"/>
    <property type="match status" value="1"/>
</dbReference>
<dbReference type="HAMAP" id="MF_01603">
    <property type="entry name" value="HldE"/>
    <property type="match status" value="1"/>
</dbReference>
<dbReference type="InterPro" id="IPR023030">
    <property type="entry name" value="Bifunc_HldE"/>
</dbReference>
<dbReference type="InterPro" id="IPR002173">
    <property type="entry name" value="Carboh/pur_kinase_PfkB_CS"/>
</dbReference>
<dbReference type="InterPro" id="IPR004821">
    <property type="entry name" value="Cyt_trans-like"/>
</dbReference>
<dbReference type="InterPro" id="IPR011611">
    <property type="entry name" value="PfkB_dom"/>
</dbReference>
<dbReference type="InterPro" id="IPR011913">
    <property type="entry name" value="RfaE_dom_I"/>
</dbReference>
<dbReference type="InterPro" id="IPR011914">
    <property type="entry name" value="RfaE_dom_II"/>
</dbReference>
<dbReference type="InterPro" id="IPR029056">
    <property type="entry name" value="Ribokinase-like"/>
</dbReference>
<dbReference type="InterPro" id="IPR014729">
    <property type="entry name" value="Rossmann-like_a/b/a_fold"/>
</dbReference>
<dbReference type="NCBIfam" id="TIGR00125">
    <property type="entry name" value="cyt_tran_rel"/>
    <property type="match status" value="1"/>
</dbReference>
<dbReference type="NCBIfam" id="NF008454">
    <property type="entry name" value="PRK11316.1"/>
    <property type="match status" value="1"/>
</dbReference>
<dbReference type="NCBIfam" id="TIGR02198">
    <property type="entry name" value="rfaE_dom_I"/>
    <property type="match status" value="1"/>
</dbReference>
<dbReference type="NCBIfam" id="TIGR02199">
    <property type="entry name" value="rfaE_dom_II"/>
    <property type="match status" value="1"/>
</dbReference>
<dbReference type="PANTHER" id="PTHR46969">
    <property type="entry name" value="BIFUNCTIONAL PROTEIN HLDE"/>
    <property type="match status" value="1"/>
</dbReference>
<dbReference type="PANTHER" id="PTHR46969:SF1">
    <property type="entry name" value="BIFUNCTIONAL PROTEIN HLDE"/>
    <property type="match status" value="1"/>
</dbReference>
<dbReference type="Pfam" id="PF01467">
    <property type="entry name" value="CTP_transf_like"/>
    <property type="match status" value="1"/>
</dbReference>
<dbReference type="Pfam" id="PF00294">
    <property type="entry name" value="PfkB"/>
    <property type="match status" value="1"/>
</dbReference>
<dbReference type="SUPFAM" id="SSF52374">
    <property type="entry name" value="Nucleotidylyl transferase"/>
    <property type="match status" value="1"/>
</dbReference>
<dbReference type="SUPFAM" id="SSF53613">
    <property type="entry name" value="Ribokinase-like"/>
    <property type="match status" value="1"/>
</dbReference>
<dbReference type="PROSITE" id="PS00583">
    <property type="entry name" value="PFKB_KINASES_1"/>
    <property type="match status" value="1"/>
</dbReference>
<gene>
    <name evidence="1" type="primary">hldE</name>
    <name type="ordered locus">SPA3068</name>
</gene>
<feature type="chain" id="PRO_0000255781" description="Bifunctional protein HldE">
    <location>
        <begin position="1"/>
        <end position="477"/>
    </location>
</feature>
<feature type="region of interest" description="Ribokinase">
    <location>
        <begin position="1"/>
        <end position="318"/>
    </location>
</feature>
<feature type="region of interest" description="Cytidylyltransferase">
    <location>
        <begin position="344"/>
        <end position="477"/>
    </location>
</feature>
<feature type="active site" evidence="1">
    <location>
        <position position="264"/>
    </location>
</feature>
<feature type="binding site" evidence="1">
    <location>
        <begin position="195"/>
        <end position="198"/>
    </location>
    <ligand>
        <name>ATP</name>
        <dbReference type="ChEBI" id="CHEBI:30616"/>
    </ligand>
</feature>
<proteinExistence type="inferred from homology"/>
<protein>
    <recommendedName>
        <fullName evidence="1">Bifunctional protein HldE</fullName>
    </recommendedName>
    <domain>
        <recommendedName>
            <fullName evidence="1">D-beta-D-heptose 7-phosphate kinase</fullName>
            <ecNumber evidence="1">2.7.1.167</ecNumber>
        </recommendedName>
        <alternativeName>
            <fullName evidence="1">D-beta-D-heptose 7-phosphotransferase</fullName>
        </alternativeName>
        <alternativeName>
            <fullName evidence="1">D-glycero-beta-D-manno-heptose-7-phosphate kinase</fullName>
        </alternativeName>
    </domain>
    <domain>
        <recommendedName>
            <fullName evidence="1">D-beta-D-heptose 1-phosphate adenylyltransferase</fullName>
            <ecNumber evidence="1">2.7.7.70</ecNumber>
        </recommendedName>
        <alternativeName>
            <fullName evidence="1">D-glycero-beta-D-manno-heptose 1-phosphate adenylyltransferase</fullName>
        </alternativeName>
    </domain>
</protein>
<accession>Q5PC86</accession>
<sequence length="477" mass="51138">MKVNLPAFERAGVMVVGDVMLDRYWYGPTCRISPEAPVPVVKVNTVEERPGGAANVAMNIASLGANARLVGLTGIDDAARALSKTLAEVNVKCDFVSVPTHPTITKLRVLSRNQQLIRLDFEEGFEGVDPQPLHERINQALGSIGALVLSDYAKGALTSVQTMISLARQAGVPVLIDPKGTDFERYRGATLLTPNLSEFEAVAGKCKSEDELVERGMKLIADYDLSALLVTRSEQGMTLLQPNKAPLHMPTQAQEVYDVTGAGDTVIGVLAATLAAGNTLEEACYFANAAAGVVVGKLGTSTVSPIELENAVRGRADTGFGVMTEEELRQAVASARKRGEKVVMTNGVFDILHAGHVSYLANARKLGDRLIVAVNSDASTKRLKGESRPVNPLEQRMIVLGALESVDWIVSFEEDTPQRLIAGILPDLLVKGGDYKPEEIAGSEEVWANGGEVMVLNFEDGCSTTNIIKKIQTESEK</sequence>
<keyword id="KW-0067">ATP-binding</keyword>
<keyword id="KW-0119">Carbohydrate metabolism</keyword>
<keyword id="KW-0418">Kinase</keyword>
<keyword id="KW-0511">Multifunctional enzyme</keyword>
<keyword id="KW-0547">Nucleotide-binding</keyword>
<keyword id="KW-0548">Nucleotidyltransferase</keyword>
<keyword id="KW-0808">Transferase</keyword>
<organism>
    <name type="scientific">Salmonella paratyphi A (strain ATCC 9150 / SARB42)</name>
    <dbReference type="NCBI Taxonomy" id="295319"/>
    <lineage>
        <taxon>Bacteria</taxon>
        <taxon>Pseudomonadati</taxon>
        <taxon>Pseudomonadota</taxon>
        <taxon>Gammaproteobacteria</taxon>
        <taxon>Enterobacterales</taxon>
        <taxon>Enterobacteriaceae</taxon>
        <taxon>Salmonella</taxon>
    </lineage>
</organism>
<comment type="function">
    <text evidence="1">Catalyzes the phosphorylation of D-glycero-D-manno-heptose 7-phosphate at the C-1 position to selectively form D-glycero-beta-D-manno-heptose-1,7-bisphosphate.</text>
</comment>
<comment type="function">
    <text evidence="1">Catalyzes the ADP transfer from ATP to D-glycero-beta-D-manno-heptose 1-phosphate, yielding ADP-D-glycero-beta-D-manno-heptose.</text>
</comment>
<comment type="catalytic activity">
    <reaction evidence="1">
        <text>D-glycero-beta-D-manno-heptose 7-phosphate + ATP = D-glycero-beta-D-manno-heptose 1,7-bisphosphate + ADP + H(+)</text>
        <dbReference type="Rhea" id="RHEA:27473"/>
        <dbReference type="ChEBI" id="CHEBI:15378"/>
        <dbReference type="ChEBI" id="CHEBI:30616"/>
        <dbReference type="ChEBI" id="CHEBI:60204"/>
        <dbReference type="ChEBI" id="CHEBI:60208"/>
        <dbReference type="ChEBI" id="CHEBI:456216"/>
        <dbReference type="EC" id="2.7.1.167"/>
    </reaction>
</comment>
<comment type="catalytic activity">
    <reaction evidence="1">
        <text>D-glycero-beta-D-manno-heptose 1-phosphate + ATP + H(+) = ADP-D-glycero-beta-D-manno-heptose + diphosphate</text>
        <dbReference type="Rhea" id="RHEA:27465"/>
        <dbReference type="ChEBI" id="CHEBI:15378"/>
        <dbReference type="ChEBI" id="CHEBI:30616"/>
        <dbReference type="ChEBI" id="CHEBI:33019"/>
        <dbReference type="ChEBI" id="CHEBI:59967"/>
        <dbReference type="ChEBI" id="CHEBI:61593"/>
        <dbReference type="EC" id="2.7.7.70"/>
    </reaction>
</comment>
<comment type="pathway">
    <text evidence="1">Nucleotide-sugar biosynthesis; ADP-L-glycero-beta-D-manno-heptose biosynthesis; ADP-L-glycero-beta-D-manno-heptose from D-glycero-beta-D-manno-heptose 7-phosphate: step 1/4.</text>
</comment>
<comment type="pathway">
    <text evidence="1">Nucleotide-sugar biosynthesis; ADP-L-glycero-beta-D-manno-heptose biosynthesis; ADP-L-glycero-beta-D-manno-heptose from D-glycero-beta-D-manno-heptose 7-phosphate: step 3/4.</text>
</comment>
<comment type="subunit">
    <text evidence="1">Homodimer.</text>
</comment>
<comment type="similarity">
    <text evidence="1">In the N-terminal section; belongs to the carbohydrate kinase PfkB family.</text>
</comment>
<comment type="similarity">
    <text evidence="1">In the C-terminal section; belongs to the cytidylyltransferase family.</text>
</comment>
<evidence type="ECO:0000255" key="1">
    <source>
        <dbReference type="HAMAP-Rule" id="MF_01603"/>
    </source>
</evidence>
<name>HLDE_SALPA</name>